<proteinExistence type="inferred from homology"/>
<keyword id="KW-0067">ATP-binding</keyword>
<keyword id="KW-0106">Calcium</keyword>
<keyword id="KW-0244">Early protein</keyword>
<keyword id="KW-0479">Metal-binding</keyword>
<keyword id="KW-0507">mRNA processing</keyword>
<keyword id="KW-0547">Nucleotide-binding</keyword>
<keyword id="KW-1185">Reference proteome</keyword>
<keyword id="KW-0804">Transcription</keyword>
<keyword id="KW-0808">Transferase</keyword>
<dbReference type="EC" id="2.7.7.19"/>
<dbReference type="EMBL" id="MT903340">
    <property type="protein sequence ID" value="QNP12919.1"/>
    <property type="molecule type" value="Genomic_DNA"/>
</dbReference>
<dbReference type="RefSeq" id="YP_010377046.1">
    <property type="nucleotide sequence ID" value="NC_063383.1"/>
</dbReference>
<dbReference type="SMR" id="A0A7H0DN36"/>
<dbReference type="GeneID" id="72551459"/>
<dbReference type="Proteomes" id="UP000516359">
    <property type="component" value="Genome"/>
</dbReference>
<dbReference type="GO" id="GO:0005524">
    <property type="term" value="F:ATP binding"/>
    <property type="evidence" value="ECO:0007669"/>
    <property type="project" value="UniProtKB-KW"/>
</dbReference>
<dbReference type="GO" id="GO:0046872">
    <property type="term" value="F:metal ion binding"/>
    <property type="evidence" value="ECO:0007669"/>
    <property type="project" value="UniProtKB-KW"/>
</dbReference>
<dbReference type="GO" id="GO:1990817">
    <property type="term" value="F:poly(A) RNA polymerase activity"/>
    <property type="evidence" value="ECO:0007669"/>
    <property type="project" value="InterPro"/>
</dbReference>
<dbReference type="GO" id="GO:0006397">
    <property type="term" value="P:mRNA processing"/>
    <property type="evidence" value="ECO:0007669"/>
    <property type="project" value="UniProtKB-KW"/>
</dbReference>
<dbReference type="CDD" id="cd20919">
    <property type="entry name" value="polyA_pol_Pox"/>
    <property type="match status" value="1"/>
</dbReference>
<dbReference type="Gene3D" id="1.20.1270.320">
    <property type="entry name" value="Poxvirus poly(A) polymerase, N domain"/>
    <property type="match status" value="1"/>
</dbReference>
<dbReference type="Gene3D" id="3.30.460.60">
    <property type="entry name" value="Poxvirus poly(A) polymerase, nucleotidyltransferase domain"/>
    <property type="match status" value="1"/>
</dbReference>
<dbReference type="InterPro" id="IPR004976">
    <property type="entry name" value="PolyA_pol_cat_Poxvir"/>
</dbReference>
<dbReference type="InterPro" id="IPR037265">
    <property type="entry name" value="PolyA_pol_cat_sf"/>
</dbReference>
<dbReference type="InterPro" id="IPR024231">
    <property type="entry name" value="PolyA_pol_nucTrfase_Poxvir"/>
</dbReference>
<dbReference type="InterPro" id="IPR038419">
    <property type="entry name" value="PolyA_pol_nucTrfase_sf_Poxvir"/>
</dbReference>
<dbReference type="InterPro" id="IPR024397">
    <property type="entry name" value="Poxvirus_polyA_pol_cat_C"/>
</dbReference>
<dbReference type="InterPro" id="IPR024398">
    <property type="entry name" value="Poxvirus_polyA_pol_cat_N"/>
</dbReference>
<dbReference type="InterPro" id="IPR038337">
    <property type="entry name" value="Poxvirus_polyA_pol_cat_N_sf"/>
</dbReference>
<dbReference type="Pfam" id="PF03296">
    <property type="entry name" value="Pox_polyA_pol"/>
    <property type="match status" value="1"/>
</dbReference>
<dbReference type="Pfam" id="PF12629">
    <property type="entry name" value="Pox_polyA_pol_C"/>
    <property type="match status" value="1"/>
</dbReference>
<dbReference type="Pfam" id="PF12630">
    <property type="entry name" value="Pox_polyA_pol_N"/>
    <property type="match status" value="1"/>
</dbReference>
<dbReference type="PIRSF" id="PIRSF015693">
    <property type="entry name" value="VAC-48L_nuct"/>
    <property type="match status" value="1"/>
</dbReference>
<dbReference type="SUPFAM" id="SSF160957">
    <property type="entry name" value="Poly(A) polymerase catalytic subunit-like"/>
    <property type="match status" value="1"/>
</dbReference>
<organismHost>
    <name type="scientific">Cynomys gunnisoni</name>
    <name type="common">Gunnison's prairie dog</name>
    <name type="synonym">Spermophilus gunnisoni</name>
    <dbReference type="NCBI Taxonomy" id="45479"/>
</organismHost>
<organismHost>
    <name type="scientific">Cynomys leucurus</name>
    <name type="common">White-tailed prairie dog</name>
    <dbReference type="NCBI Taxonomy" id="99825"/>
</organismHost>
<organismHost>
    <name type="scientific">Cynomys ludovicianus</name>
    <name type="common">Black-tailed prairie dog</name>
    <dbReference type="NCBI Taxonomy" id="45480"/>
</organismHost>
<organismHost>
    <name type="scientific">Cynomys mexicanus</name>
    <name type="common">Mexican prairie dog</name>
    <dbReference type="NCBI Taxonomy" id="99826"/>
</organismHost>
<organismHost>
    <name type="scientific">Cynomys parvidens</name>
    <name type="common">Utah prairie dog</name>
    <dbReference type="NCBI Taxonomy" id="99827"/>
</organismHost>
<organismHost>
    <name type="scientific">Gliridae</name>
    <name type="common">dormice</name>
    <dbReference type="NCBI Taxonomy" id="30650"/>
</organismHost>
<organismHost>
    <name type="scientific">Heliosciurus ruwenzorii</name>
    <name type="common">Ruwenzori sun squirrel</name>
    <dbReference type="NCBI Taxonomy" id="226685"/>
</organismHost>
<organismHost>
    <name type="scientific">Homo sapiens</name>
    <name type="common">Human</name>
    <dbReference type="NCBI Taxonomy" id="9606"/>
</organismHost>
<organismHost>
    <name type="scientific">Mus musculus</name>
    <name type="common">Mouse</name>
    <dbReference type="NCBI Taxonomy" id="10090"/>
</organismHost>
<comment type="function">
    <text evidence="1">Polymerase that creates the 3'-poly(A) tail of mRNA's.</text>
</comment>
<comment type="catalytic activity">
    <reaction evidence="1">
        <text>RNA(n) + ATP = RNA(n)-3'-adenine ribonucleotide + diphosphate</text>
        <dbReference type="Rhea" id="RHEA:11332"/>
        <dbReference type="Rhea" id="RHEA-COMP:14527"/>
        <dbReference type="Rhea" id="RHEA-COMP:17347"/>
        <dbReference type="ChEBI" id="CHEBI:30616"/>
        <dbReference type="ChEBI" id="CHEBI:33019"/>
        <dbReference type="ChEBI" id="CHEBI:140395"/>
        <dbReference type="ChEBI" id="CHEBI:173115"/>
        <dbReference type="EC" id="2.7.7.19"/>
    </reaction>
</comment>
<comment type="subunit">
    <text evidence="1">Heterodimer of a large (catalytic) subunit and a small (regulatory) subunit.</text>
</comment>
<comment type="induction">
    <text evidence="1">Expressed in the early phase of the viral replicative cycle.</text>
</comment>
<comment type="similarity">
    <text evidence="3">Belongs to the poxviridae poly(A) polymerase catalytic subunit family.</text>
</comment>
<evidence type="ECO:0000250" key="1">
    <source>
        <dbReference type="UniProtKB" id="P23371"/>
    </source>
</evidence>
<evidence type="ECO:0000255" key="2">
    <source>
        <dbReference type="PIRSR" id="PIRSR015693-50"/>
    </source>
</evidence>
<evidence type="ECO:0000305" key="3"/>
<name>PAP1_MONPV</name>
<reference key="1">
    <citation type="journal article" date="2022" name="J. Infect. Dis.">
        <title>Exportation of Monkeypox virus from the African continent.</title>
        <authorList>
            <person name="Mauldin M.R."/>
            <person name="McCollum A.M."/>
            <person name="Nakazawa Y.J."/>
            <person name="Mandra A."/>
            <person name="Whitehouse E.R."/>
            <person name="Davidson W."/>
            <person name="Zhao H."/>
            <person name="Gao J."/>
            <person name="Li Y."/>
            <person name="Doty J."/>
            <person name="Yinka-Ogunleye A."/>
            <person name="Akinpelu A."/>
            <person name="Aruna O."/>
            <person name="Naidoo D."/>
            <person name="Lewandowski K."/>
            <person name="Afrough B."/>
            <person name="Graham V."/>
            <person name="Aarons E."/>
            <person name="Hewson R."/>
            <person name="Vipond R."/>
            <person name="Dunning J."/>
            <person name="Chand M."/>
            <person name="Brown C."/>
            <person name="Cohen-Gihon I."/>
            <person name="Erez N."/>
            <person name="Shifman O."/>
            <person name="Israeli O."/>
            <person name="Sharon M."/>
            <person name="Schwartz E."/>
            <person name="Beth-Din A."/>
            <person name="Zvi A."/>
            <person name="Mak T.M."/>
            <person name="Ng Y.K."/>
            <person name="Cui L."/>
            <person name="Lin R.T.P."/>
            <person name="Olson V.A."/>
            <person name="Brooks T."/>
            <person name="Paran N."/>
            <person name="Ihekweazu C."/>
            <person name="Reynolds M.G."/>
        </authorList>
    </citation>
    <scope>NUCLEOTIDE SEQUENCE [LARGE SCALE GENOMIC DNA]</scope>
    <source>
        <strain>MPXV-M5312_HM12_Rivers</strain>
    </source>
</reference>
<organism>
    <name type="scientific">Monkeypox virus</name>
    <dbReference type="NCBI Taxonomy" id="10244"/>
    <lineage>
        <taxon>Viruses</taxon>
        <taxon>Varidnaviria</taxon>
        <taxon>Bamfordvirae</taxon>
        <taxon>Nucleocytoviricota</taxon>
        <taxon>Pokkesviricetes</taxon>
        <taxon>Chitovirales</taxon>
        <taxon>Poxviridae</taxon>
        <taxon>Chordopoxvirinae</taxon>
        <taxon>Orthopoxvirus</taxon>
    </lineage>
</organism>
<gene>
    <name type="primary">OPG063</name>
    <name type="synonym">PAPL</name>
    <name type="ORF">MPXVgp050</name>
</gene>
<sequence>MNRNPDQNTLPNITLKIIETYLGRVPSVNEYHMLKLQARNIQKITVFNKDIFVSLVKKNKKRFFFDVDTSASEIKDRILSYFSKQTQTYNIGKLFTIIELQSVLVTTYTDILGVLTIKAPNVISSKISYNVTSMEELARDMLNSMNVAVIDKAKVMGRHNVSSLVKNVNKLMEEYLRRHNKSCICYGSYSLYLINPNIRYGDIDILQTNSRTFLIDLAFLIKFITGNNIILSKIPYLRNYMVIKDENDNHIIDSFNIRQDTMNIVPKIFIDNIYIVDPTFQLLNMIKMFSQIDRLEDLSKDPEKFNVRMATMLEYVRYTHGIVFDGTRNNMPMKCIIDENNRIVTVTTKDYFSFKKCLVYLDENVLSSDILDLNADTSCDFESVTNSVYLIHDNIMYTYFSNTILLSDKGKVHEISARGLCAHILLYQMLTSGEYKQCLSDLLNSMMNRDKIPIYSHTERDKKPGRHGFINIEKDIIVF</sequence>
<protein>
    <recommendedName>
        <fullName>Poly(A) polymerase catalytic subunit</fullName>
        <ecNumber>2.7.7.19</ecNumber>
    </recommendedName>
    <alternativeName>
        <fullName>Poly(A) polymerase large subunit</fullName>
        <shortName>PAP-L</shortName>
    </alternativeName>
</protein>
<accession>A0A7H0DN36</accession>
<feature type="chain" id="PRO_0000457703" description="Poly(A) polymerase catalytic subunit">
    <location>
        <begin position="1"/>
        <end position="479"/>
    </location>
</feature>
<feature type="active site" evidence="2">
    <location>
        <position position="202"/>
    </location>
</feature>
<feature type="active site" evidence="2">
    <location>
        <position position="204"/>
    </location>
</feature>
<feature type="binding site" evidence="1">
    <location>
        <position position="202"/>
    </location>
    <ligand>
        <name>Ca(2+)</name>
        <dbReference type="ChEBI" id="CHEBI:29108"/>
        <label>1</label>
    </ligand>
</feature>
<feature type="binding site" evidence="1">
    <location>
        <position position="202"/>
    </location>
    <ligand>
        <name>Ca(2+)</name>
        <dbReference type="ChEBI" id="CHEBI:29108"/>
        <label>2</label>
    </ligand>
</feature>
<feature type="binding site" evidence="1">
    <location>
        <position position="204"/>
    </location>
    <ligand>
        <name>Ca(2+)</name>
        <dbReference type="ChEBI" id="CHEBI:29108"/>
        <label>1</label>
    </ligand>
</feature>
<feature type="binding site" evidence="1">
    <location>
        <position position="204"/>
    </location>
    <ligand>
        <name>Ca(2+)</name>
        <dbReference type="ChEBI" id="CHEBI:29108"/>
        <label>2</label>
    </ligand>
</feature>
<feature type="binding site" evidence="1">
    <location>
        <position position="253"/>
    </location>
    <ligand>
        <name>Ca(2+)</name>
        <dbReference type="ChEBI" id="CHEBI:29108"/>
        <label>2</label>
    </ligand>
</feature>